<protein>
    <recommendedName>
        <fullName evidence="4">3alpha-hydroxysteroid dehydrogenase</fullName>
        <shortName evidence="4">3alpha-HSDH</shortName>
        <ecNumber evidence="3">1.1.1.-</ecNumber>
    </recommendedName>
    <alternativeName>
        <fullName>3alpha-hydroxycholanate dehydrogenase (NADP(+))</fullName>
        <ecNumber evidence="3">1.1.1.392</ecNumber>
    </alternativeName>
    <alternativeName>
        <fullName evidence="5">NADP-dependent bile acid 3alpha-dehydrogenase</fullName>
    </alternativeName>
</protein>
<sequence>MFMMLKNKVAIVTGGTRGIGFAVVKKFIENGAAVSLWGSRQETVDQALEQLKELYPDAKISGKYPSLKDTAQVTAMINQVKEEFGAVDILVNNAGISQSTSFYNYQPEEFQKIVDLNVTAVFNCSQAAAKIMKEQGGGVILNTSSMVSIYGQPSGCGYPASKFAVNGLTKSLARELGCDNIRVNAVAPGITRTDMVAALPEAVIKPLIATIPLGRVGEPEDIANAFLFLASDMASYVTGEILSVDGAARS</sequence>
<accession>A7B3K3</accession>
<name>3AHDP_MEDG7</name>
<keyword id="KW-0443">Lipid metabolism</keyword>
<keyword id="KW-0521">NADP</keyword>
<keyword id="KW-0560">Oxidoreductase</keyword>
<keyword id="KW-0753">Steroid metabolism</keyword>
<gene>
    <name evidence="7" type="primary">baiA</name>
    <name evidence="7" type="ORF">RUMGNA_02133</name>
</gene>
<reference key="1">
    <citation type="submission" date="2007-04" db="EMBL/GenBank/DDBJ databases">
        <authorList>
            <person name="Fulton L."/>
            <person name="Clifton S."/>
            <person name="Fulton B."/>
            <person name="Xu J."/>
            <person name="Minx P."/>
            <person name="Pepin K.H."/>
            <person name="Johnson M."/>
            <person name="Thiruvilangam P."/>
            <person name="Bhonagiri V."/>
            <person name="Nash W.E."/>
            <person name="Mardis E.R."/>
            <person name="Wilson R.K."/>
        </authorList>
    </citation>
    <scope>NUCLEOTIDE SEQUENCE [LARGE SCALE GENOMIC DNA]</scope>
    <source>
        <strain evidence="7 8">ATCC 29149 / DSM 114966 / JCM 6515 / VPI C7-9</strain>
    </source>
</reference>
<reference key="2">
    <citation type="submission" date="2007-06" db="EMBL/GenBank/DDBJ databases">
        <title>Draft genome sequence of Ruminococcus gnavus (ATCC 29149).</title>
        <authorList>
            <person name="Sudarsanam P."/>
            <person name="Ley R."/>
            <person name="Guruge J."/>
            <person name="Turnbaugh P.J."/>
            <person name="Mahowald M."/>
            <person name="Liep D."/>
            <person name="Gordon J."/>
        </authorList>
    </citation>
    <scope>NUCLEOTIDE SEQUENCE [LARGE SCALE GENOMIC DNA]</scope>
    <source>
        <strain evidence="7 8">ATCC 29149 / DSM 114966 / JCM 6515 / VPI C7-9</strain>
    </source>
</reference>
<reference key="3">
    <citation type="journal article" date="2015" name="Nat. Chem. Biol.">
        <title>A biosynthetic pathway for a prominent class of microbiota-derived bile acids.</title>
        <authorList>
            <person name="Devlin A.S."/>
            <person name="Fischbach M.A."/>
        </authorList>
    </citation>
    <scope>FUNCTION</scope>
    <scope>CATALYTIC ACTIVITY</scope>
    <scope>BIOPHYSICOCHEMICAL PROPERTIES</scope>
    <scope>SUBSTRATE SPECIFICITY</scope>
    <source>
        <strain>ATCC 29149 / DSM 114966 / JCM 6515 / VPI C7-9</strain>
    </source>
</reference>
<proteinExistence type="evidence at protein level"/>
<dbReference type="EC" id="1.1.1.-" evidence="3"/>
<dbReference type="EC" id="1.1.1.392" evidence="3"/>
<dbReference type="EMBL" id="AAYG02000016">
    <property type="protein sequence ID" value="EDN77529.1"/>
    <property type="molecule type" value="Genomic_DNA"/>
</dbReference>
<dbReference type="SMR" id="A7B3K3"/>
<dbReference type="SwissLipids" id="SLP:000001340"/>
<dbReference type="PaxDb" id="411470-RUMGNA_02133"/>
<dbReference type="KEGG" id="ag:EDN77529"/>
<dbReference type="eggNOG" id="COG1028">
    <property type="taxonomic scope" value="Bacteria"/>
</dbReference>
<dbReference type="BioCyc" id="MetaCyc:MONOMER-19696"/>
<dbReference type="Proteomes" id="UP000004410">
    <property type="component" value="Unassembled WGS sequence"/>
</dbReference>
<dbReference type="GO" id="GO:0047043">
    <property type="term" value="F:3-alpha-hydroxycholanate dehydrogenase activity"/>
    <property type="evidence" value="ECO:0000314"/>
    <property type="project" value="UniProt"/>
</dbReference>
<dbReference type="GO" id="GO:0048038">
    <property type="term" value="F:quinone binding"/>
    <property type="evidence" value="ECO:0007669"/>
    <property type="project" value="TreeGrafter"/>
</dbReference>
<dbReference type="GO" id="GO:0008206">
    <property type="term" value="P:bile acid metabolic process"/>
    <property type="evidence" value="ECO:0000314"/>
    <property type="project" value="UniProt"/>
</dbReference>
<dbReference type="GO" id="GO:0006633">
    <property type="term" value="P:fatty acid biosynthetic process"/>
    <property type="evidence" value="ECO:0007669"/>
    <property type="project" value="TreeGrafter"/>
</dbReference>
<dbReference type="FunFam" id="3.40.50.720:FF:000084">
    <property type="entry name" value="Short-chain dehydrogenase reductase"/>
    <property type="match status" value="1"/>
</dbReference>
<dbReference type="Gene3D" id="3.40.50.720">
    <property type="entry name" value="NAD(P)-binding Rossmann-like Domain"/>
    <property type="match status" value="1"/>
</dbReference>
<dbReference type="InterPro" id="IPR036291">
    <property type="entry name" value="NAD(P)-bd_dom_sf"/>
</dbReference>
<dbReference type="InterPro" id="IPR020904">
    <property type="entry name" value="Sc_DH/Rdtase_CS"/>
</dbReference>
<dbReference type="InterPro" id="IPR002347">
    <property type="entry name" value="SDR_fam"/>
</dbReference>
<dbReference type="NCBIfam" id="NF005559">
    <property type="entry name" value="PRK07231.1"/>
    <property type="match status" value="1"/>
</dbReference>
<dbReference type="NCBIfam" id="NF009466">
    <property type="entry name" value="PRK12826.1-2"/>
    <property type="match status" value="1"/>
</dbReference>
<dbReference type="PANTHER" id="PTHR42760:SF133">
    <property type="entry name" value="3-OXOACYL-[ACYL-CARRIER-PROTEIN] REDUCTASE"/>
    <property type="match status" value="1"/>
</dbReference>
<dbReference type="PANTHER" id="PTHR42760">
    <property type="entry name" value="SHORT-CHAIN DEHYDROGENASES/REDUCTASES FAMILY MEMBER"/>
    <property type="match status" value="1"/>
</dbReference>
<dbReference type="Pfam" id="PF13561">
    <property type="entry name" value="adh_short_C2"/>
    <property type="match status" value="1"/>
</dbReference>
<dbReference type="PRINTS" id="PR00081">
    <property type="entry name" value="GDHRDH"/>
</dbReference>
<dbReference type="PRINTS" id="PR00080">
    <property type="entry name" value="SDRFAMILY"/>
</dbReference>
<dbReference type="SUPFAM" id="SSF51735">
    <property type="entry name" value="NAD(P)-binding Rossmann-fold domains"/>
    <property type="match status" value="1"/>
</dbReference>
<dbReference type="PROSITE" id="PS00061">
    <property type="entry name" value="ADH_SHORT"/>
    <property type="match status" value="1"/>
</dbReference>
<organism>
    <name type="scientific">Mediterraneibacter gnavus (strain ATCC 29149 / DSM 114966 / JCM 6515 / VPI C7-9)</name>
    <name type="common">Ruminococcus gnavus</name>
    <dbReference type="NCBI Taxonomy" id="411470"/>
    <lineage>
        <taxon>Bacteria</taxon>
        <taxon>Bacillati</taxon>
        <taxon>Bacillota</taxon>
        <taxon>Clostridia</taxon>
        <taxon>Lachnospirales</taxon>
        <taxon>Lachnospiraceae</taxon>
        <taxon>Mediterraneibacter</taxon>
    </lineage>
</organism>
<feature type="chain" id="PRO_0000443426" description="3alpha-hydroxysteroid dehydrogenase">
    <location>
        <begin position="1"/>
        <end position="250"/>
    </location>
</feature>
<feature type="active site" description="Proton acceptor" evidence="2">
    <location>
        <position position="158"/>
    </location>
</feature>
<feature type="binding site" evidence="1">
    <location>
        <position position="93"/>
    </location>
    <ligand>
        <name>NADP(+)</name>
        <dbReference type="ChEBI" id="CHEBI:58349"/>
    </ligand>
</feature>
<feature type="binding site" evidence="1">
    <location>
        <position position="158"/>
    </location>
    <ligand>
        <name>NADP(+)</name>
        <dbReference type="ChEBI" id="CHEBI:58349"/>
    </ligand>
</feature>
<feature type="binding site" evidence="1">
    <location>
        <position position="162"/>
    </location>
    <ligand>
        <name>NADP(+)</name>
        <dbReference type="ChEBI" id="CHEBI:58349"/>
    </ligand>
</feature>
<evidence type="ECO:0000250" key="1">
    <source>
        <dbReference type="UniProtKB" id="Q9ZNN8"/>
    </source>
</evidence>
<evidence type="ECO:0000255" key="2">
    <source>
        <dbReference type="PROSITE-ProRule" id="PRU10001"/>
    </source>
</evidence>
<evidence type="ECO:0000269" key="3">
    <source>
    </source>
</evidence>
<evidence type="ECO:0000303" key="4">
    <source>
    </source>
</evidence>
<evidence type="ECO:0000305" key="5"/>
<evidence type="ECO:0000305" key="6">
    <source>
    </source>
</evidence>
<evidence type="ECO:0000312" key="7">
    <source>
        <dbReference type="EMBL" id="EDN77529.1"/>
    </source>
</evidence>
<evidence type="ECO:0000312" key="8">
    <source>
        <dbReference type="Proteomes" id="UP000004410"/>
    </source>
</evidence>
<comment type="function">
    <text evidence="3">Involved in the modification of secondary bile acids into iso-bile acids (3beta-bile acids) via epimerization of the 3-OH group through a 3-oxo-intermediate. Catalyzes the oxidation of deoxycholate (DCA) and lithocholate (LCA) to yield 12-alpha-hydroxy-3-oxo-5-beta-cholan-24-oate (3-oxo-DCA) and 3-oxo-5-beta-cholan-24-oate (3-oxo-LCA), respectively. Is also able to catalyze the oxidation of cholate (CA) and chenodeoxycholate (CDCA) into 3-dehydrocholate (3-oxo-CA) and 7-alpha-hydroxy-3-oxo-5-beta-cholan-24-oate (3-oxo-CDCA), respectively. Can also catalyze the reverse reactions in vitro. Accepts both NADPH and NADH as cosubstrates. The conversion of the abundant bile acid DCA into isoDCA by the gut bacterium R.gnavus favors the growth of the keystone commensal genus Bacteroides, since isoDCA is less cytotoxic than its parent compound, DCA; iso-bile acids have thus a potential role in modulating gut community composition.</text>
</comment>
<comment type="catalytic activity">
    <reaction evidence="3">
        <text>lithocholate + NADP(+) = 3-oxo-5beta-cholan-24-oate + NADPH + H(+)</text>
        <dbReference type="Rhea" id="RHEA:47496"/>
        <dbReference type="ChEBI" id="CHEBI:11867"/>
        <dbReference type="ChEBI" id="CHEBI:15378"/>
        <dbReference type="ChEBI" id="CHEBI:29744"/>
        <dbReference type="ChEBI" id="CHEBI:57783"/>
        <dbReference type="ChEBI" id="CHEBI:58349"/>
        <dbReference type="EC" id="1.1.1.392"/>
    </reaction>
    <physiologicalReaction direction="left-to-right" evidence="6">
        <dbReference type="Rhea" id="RHEA:47497"/>
    </physiologicalReaction>
</comment>
<comment type="catalytic activity">
    <reaction evidence="3">
        <text>deoxycholate + NADP(+) = 12alpha-hydroxy-3-oxo-5beta-cholan-24-oate + NADPH + H(+)</text>
        <dbReference type="Rhea" id="RHEA:47480"/>
        <dbReference type="ChEBI" id="CHEBI:15378"/>
        <dbReference type="ChEBI" id="CHEBI:23614"/>
        <dbReference type="ChEBI" id="CHEBI:57783"/>
        <dbReference type="ChEBI" id="CHEBI:58349"/>
        <dbReference type="ChEBI" id="CHEBI:87734"/>
    </reaction>
    <physiologicalReaction direction="left-to-right" evidence="6">
        <dbReference type="Rhea" id="RHEA:47481"/>
    </physiologicalReaction>
</comment>
<comment type="catalytic activity">
    <reaction evidence="3">
        <text>deoxycholate + NAD(+) = 12alpha-hydroxy-3-oxo-5beta-cholan-24-oate + NADH + H(+)</text>
        <dbReference type="Rhea" id="RHEA:47484"/>
        <dbReference type="ChEBI" id="CHEBI:15378"/>
        <dbReference type="ChEBI" id="CHEBI:23614"/>
        <dbReference type="ChEBI" id="CHEBI:57540"/>
        <dbReference type="ChEBI" id="CHEBI:57945"/>
        <dbReference type="ChEBI" id="CHEBI:87734"/>
    </reaction>
    <physiologicalReaction direction="left-to-right" evidence="6">
        <dbReference type="Rhea" id="RHEA:47485"/>
    </physiologicalReaction>
</comment>
<comment type="catalytic activity">
    <reaction evidence="3">
        <text>cholate + NADP(+) = 7alpha,12alpha-dihydroxy-3-oxo-5beta-cholan-24-oate + NADPH + H(+)</text>
        <dbReference type="Rhea" id="RHEA:47500"/>
        <dbReference type="ChEBI" id="CHEBI:15378"/>
        <dbReference type="ChEBI" id="CHEBI:29747"/>
        <dbReference type="ChEBI" id="CHEBI:57783"/>
        <dbReference type="ChEBI" id="CHEBI:58349"/>
        <dbReference type="ChEBI" id="CHEBI:87736"/>
    </reaction>
    <physiologicalReaction direction="left-to-right" evidence="6">
        <dbReference type="Rhea" id="RHEA:47501"/>
    </physiologicalReaction>
</comment>
<comment type="catalytic activity">
    <reaction evidence="3">
        <text>chenodeoxycholate + NADP(+) = 3-oxochenodeoxycholate + NADPH + H(+)</text>
        <dbReference type="Rhea" id="RHEA:47504"/>
        <dbReference type="ChEBI" id="CHEBI:15378"/>
        <dbReference type="ChEBI" id="CHEBI:36234"/>
        <dbReference type="ChEBI" id="CHEBI:57783"/>
        <dbReference type="ChEBI" id="CHEBI:58349"/>
        <dbReference type="ChEBI" id="CHEBI:87731"/>
    </reaction>
    <physiologicalReaction direction="left-to-right" evidence="6">
        <dbReference type="Rhea" id="RHEA:47505"/>
    </physiologicalReaction>
</comment>
<comment type="biophysicochemical properties">
    <kinetics>
        <KM evidence="3">369 uM for deoxycholate</KM>
        <text evidence="3">kcat is 99.3 min(-1) with deoxycholate as substrate.</text>
    </kinetics>
    <phDependence>
        <text evidence="3">Transformation of DCA is more efficient at pH 10 than pH 7.</text>
    </phDependence>
</comment>
<comment type="similarity">
    <text evidence="5">Belongs to the short-chain dehydrogenases/reductases (SDR) family.</text>
</comment>